<feature type="chain" id="PRO_1000094934" description="Large-conductance mechanosensitive channel">
    <location>
        <begin position="1"/>
        <end position="137"/>
    </location>
</feature>
<feature type="transmembrane region" description="Helical" evidence="1">
    <location>
        <begin position="10"/>
        <end position="30"/>
    </location>
</feature>
<feature type="transmembrane region" description="Helical" evidence="1">
    <location>
        <begin position="76"/>
        <end position="96"/>
    </location>
</feature>
<evidence type="ECO:0000255" key="1">
    <source>
        <dbReference type="HAMAP-Rule" id="MF_00115"/>
    </source>
</evidence>
<sequence length="137" mass="15049">MSFMKEFREFAMRGNVVDLAVGVIIGAAFGRIVSSLVADIIMPPLGLLLGGVDFKQFHFVLRAAEGTIPAVVMNYGTFIQSIFDFVIVALAIFSAVKLMNKLRREKAEEEPATPPAPTTEEILLAEIRDLLKAQHTK</sequence>
<accession>A9R923</accession>
<protein>
    <recommendedName>
        <fullName evidence="1">Large-conductance mechanosensitive channel</fullName>
    </recommendedName>
</protein>
<reference key="1">
    <citation type="journal article" date="2010" name="J. Bacteriol.">
        <title>Genome sequence of the deep-rooted Yersinia pestis strain Angola reveals new insights into the evolution and pangenome of the plague bacterium.</title>
        <authorList>
            <person name="Eppinger M."/>
            <person name="Worsham P.L."/>
            <person name="Nikolich M.P."/>
            <person name="Riley D.R."/>
            <person name="Sebastian Y."/>
            <person name="Mou S."/>
            <person name="Achtman M."/>
            <person name="Lindler L.E."/>
            <person name="Ravel J."/>
        </authorList>
    </citation>
    <scope>NUCLEOTIDE SEQUENCE [LARGE SCALE GENOMIC DNA]</scope>
    <source>
        <strain>Angola</strain>
    </source>
</reference>
<gene>
    <name evidence="1" type="primary">mscL</name>
    <name type="ordered locus">YpAngola_A0611</name>
</gene>
<name>MSCL_YERPG</name>
<organism>
    <name type="scientific">Yersinia pestis bv. Antiqua (strain Angola)</name>
    <dbReference type="NCBI Taxonomy" id="349746"/>
    <lineage>
        <taxon>Bacteria</taxon>
        <taxon>Pseudomonadati</taxon>
        <taxon>Pseudomonadota</taxon>
        <taxon>Gammaproteobacteria</taxon>
        <taxon>Enterobacterales</taxon>
        <taxon>Yersiniaceae</taxon>
        <taxon>Yersinia</taxon>
    </lineage>
</organism>
<keyword id="KW-0997">Cell inner membrane</keyword>
<keyword id="KW-1003">Cell membrane</keyword>
<keyword id="KW-0407">Ion channel</keyword>
<keyword id="KW-0406">Ion transport</keyword>
<keyword id="KW-0472">Membrane</keyword>
<keyword id="KW-0812">Transmembrane</keyword>
<keyword id="KW-1133">Transmembrane helix</keyword>
<keyword id="KW-0813">Transport</keyword>
<dbReference type="EMBL" id="CP000901">
    <property type="protein sequence ID" value="ABX86811.1"/>
    <property type="molecule type" value="Genomic_DNA"/>
</dbReference>
<dbReference type="RefSeq" id="WP_002209017.1">
    <property type="nucleotide sequence ID" value="NZ_CP009935.1"/>
</dbReference>
<dbReference type="SMR" id="A9R923"/>
<dbReference type="GeneID" id="57974366"/>
<dbReference type="KEGG" id="ypg:YpAngola_A0611"/>
<dbReference type="PATRIC" id="fig|349746.12.peg.1563"/>
<dbReference type="GO" id="GO:0005886">
    <property type="term" value="C:plasma membrane"/>
    <property type="evidence" value="ECO:0007669"/>
    <property type="project" value="UniProtKB-SubCell"/>
</dbReference>
<dbReference type="GO" id="GO:0008381">
    <property type="term" value="F:mechanosensitive monoatomic ion channel activity"/>
    <property type="evidence" value="ECO:0007669"/>
    <property type="project" value="UniProtKB-UniRule"/>
</dbReference>
<dbReference type="FunFam" id="1.10.1200.120:FF:000001">
    <property type="entry name" value="Large-conductance mechanosensitive channel"/>
    <property type="match status" value="1"/>
</dbReference>
<dbReference type="Gene3D" id="1.10.1200.120">
    <property type="entry name" value="Large-conductance mechanosensitive channel, MscL, domain 1"/>
    <property type="match status" value="1"/>
</dbReference>
<dbReference type="HAMAP" id="MF_00115">
    <property type="entry name" value="MscL"/>
    <property type="match status" value="1"/>
</dbReference>
<dbReference type="InterPro" id="IPR019823">
    <property type="entry name" value="Mechanosensitive_channel_CS"/>
</dbReference>
<dbReference type="InterPro" id="IPR001185">
    <property type="entry name" value="MS_channel"/>
</dbReference>
<dbReference type="InterPro" id="IPR037673">
    <property type="entry name" value="MSC/AndL"/>
</dbReference>
<dbReference type="InterPro" id="IPR036019">
    <property type="entry name" value="MscL_channel"/>
</dbReference>
<dbReference type="NCBIfam" id="TIGR00220">
    <property type="entry name" value="mscL"/>
    <property type="match status" value="1"/>
</dbReference>
<dbReference type="NCBIfam" id="NF001841">
    <property type="entry name" value="PRK00567.1-1"/>
    <property type="match status" value="1"/>
</dbReference>
<dbReference type="NCBIfam" id="NF001843">
    <property type="entry name" value="PRK00567.1-4"/>
    <property type="match status" value="1"/>
</dbReference>
<dbReference type="PANTHER" id="PTHR30266:SF2">
    <property type="entry name" value="LARGE-CONDUCTANCE MECHANOSENSITIVE CHANNEL"/>
    <property type="match status" value="1"/>
</dbReference>
<dbReference type="PANTHER" id="PTHR30266">
    <property type="entry name" value="MECHANOSENSITIVE CHANNEL MSCL"/>
    <property type="match status" value="1"/>
</dbReference>
<dbReference type="Pfam" id="PF01741">
    <property type="entry name" value="MscL"/>
    <property type="match status" value="1"/>
</dbReference>
<dbReference type="PRINTS" id="PR01264">
    <property type="entry name" value="MECHCHANNEL"/>
</dbReference>
<dbReference type="SUPFAM" id="SSF81330">
    <property type="entry name" value="Gated mechanosensitive channel"/>
    <property type="match status" value="1"/>
</dbReference>
<dbReference type="PROSITE" id="PS01327">
    <property type="entry name" value="MSCL"/>
    <property type="match status" value="1"/>
</dbReference>
<proteinExistence type="inferred from homology"/>
<comment type="function">
    <text evidence="1">Channel that opens in response to stretch forces in the membrane lipid bilayer. May participate in the regulation of osmotic pressure changes within the cell.</text>
</comment>
<comment type="subunit">
    <text evidence="1">Homopentamer.</text>
</comment>
<comment type="subcellular location">
    <subcellularLocation>
        <location evidence="1">Cell inner membrane</location>
        <topology evidence="1">Multi-pass membrane protein</topology>
    </subcellularLocation>
</comment>
<comment type="similarity">
    <text evidence="1">Belongs to the MscL family.</text>
</comment>